<accession>O88178</accession>
<sequence>MPLSLFRRLLLAVLLLVIIWTLFGPSGLGEELLSLSLASLLPAPASPGPPLALPRLLIPNPQACGGSGPPPFLLILVCTAPEHLNQRNAIRGSWGAIREARGFRVQTLFLLGEPMGQQFADLASESAAQGDVLQASFQDSYRNLTLKTLTGLNWVNKYCPMARYILKTDDDVYVNVPELVSELIQRGGPSEQWQKGKEPQEETTAVHKEHKGQAVPLLYLGRVHWRVRPTRTPESRHHVSEELWPENWGPFPPYASGTGYVLSISAVQLILKVASRAPYLPLEDVFVGVSARRVGLAPTHCVKLAGATHYPLDRCCYGKFLLTSHKVDPWKMQEAWKLVRGLNGRRTEPFCSWLQGFLGTLRCRFIAWLNS</sequence>
<organism>
    <name type="scientific">Rattus norvegicus</name>
    <name type="common">Rat</name>
    <dbReference type="NCBI Taxonomy" id="10116"/>
    <lineage>
        <taxon>Eukaryota</taxon>
        <taxon>Metazoa</taxon>
        <taxon>Chordata</taxon>
        <taxon>Craniata</taxon>
        <taxon>Vertebrata</taxon>
        <taxon>Euteleostomi</taxon>
        <taxon>Mammalia</taxon>
        <taxon>Eutheria</taxon>
        <taxon>Euarchontoglires</taxon>
        <taxon>Glires</taxon>
        <taxon>Rodentia</taxon>
        <taxon>Myomorpha</taxon>
        <taxon>Muroidea</taxon>
        <taxon>Muridae</taxon>
        <taxon>Murinae</taxon>
        <taxon>Rattus</taxon>
    </lineage>
</organism>
<feature type="chain" id="PRO_0000219162" description="Beta-1,3-galactosyltransferase 4">
    <location>
        <begin position="1"/>
        <end position="371"/>
    </location>
</feature>
<feature type="topological domain" description="Cytoplasmic" evidence="2">
    <location>
        <begin position="1"/>
        <end position="4"/>
    </location>
</feature>
<feature type="transmembrane region" description="Helical; Signal-anchor for type II membrane protein" evidence="2">
    <location>
        <begin position="5"/>
        <end position="25"/>
    </location>
</feature>
<feature type="topological domain" description="Lumenal" evidence="2">
    <location>
        <begin position="26"/>
        <end position="371"/>
    </location>
</feature>
<feature type="region of interest" description="Disordered" evidence="3">
    <location>
        <begin position="187"/>
        <end position="208"/>
    </location>
</feature>
<feature type="compositionally biased region" description="Basic and acidic residues" evidence="3">
    <location>
        <begin position="194"/>
        <end position="207"/>
    </location>
</feature>
<feature type="glycosylation site" description="N-linked (GlcNAc...) asparagine" evidence="2">
    <location>
        <position position="143"/>
    </location>
</feature>
<evidence type="ECO:0000250" key="1">
    <source>
        <dbReference type="UniProtKB" id="Q9Z0F0"/>
    </source>
</evidence>
<evidence type="ECO:0000255" key="2"/>
<evidence type="ECO:0000256" key="3">
    <source>
        <dbReference type="SAM" id="MobiDB-lite"/>
    </source>
</evidence>
<evidence type="ECO:0000269" key="4">
    <source>
    </source>
</evidence>
<evidence type="ECO:0000305" key="5"/>
<evidence type="ECO:0000305" key="6">
    <source>
    </source>
</evidence>
<name>B3GT4_RAT</name>
<reference key="1">
    <citation type="journal article" date="1997" name="J. Biol. Chem.">
        <title>Expression cloning of rat cDNA encoding UDP-galactose:GD2 beta1,3-galactosyltransferase that determines the expression of GD1b/GM1/GA1.</title>
        <authorList>
            <person name="Miyazaki H."/>
            <person name="Fukumoto S."/>
            <person name="Okada M."/>
            <person name="Hasegawa T."/>
            <person name="Furukawa K."/>
            <person name="Furukawa K."/>
        </authorList>
    </citation>
    <scope>NUCLEOTIDE SEQUENCE [MRNA]</scope>
    <scope>FUNCTION</scope>
    <scope>CATALYTIC ACTIVITY</scope>
    <scope>TISSUE SPECIFICITY</scope>
    <scope>DEVELOPMENTAL STAGE</scope>
    <source>
        <tissue>Brain</tissue>
    </source>
</reference>
<proteinExistence type="evidence at protein level"/>
<keyword id="KW-0325">Glycoprotein</keyword>
<keyword id="KW-0328">Glycosyltransferase</keyword>
<keyword id="KW-0333">Golgi apparatus</keyword>
<keyword id="KW-0443">Lipid metabolism</keyword>
<keyword id="KW-0472">Membrane</keyword>
<keyword id="KW-1185">Reference proteome</keyword>
<keyword id="KW-0735">Signal-anchor</keyword>
<keyword id="KW-0808">Transferase</keyword>
<keyword id="KW-0812">Transmembrane</keyword>
<keyword id="KW-1133">Transmembrane helix</keyword>
<gene>
    <name type="primary">B3galt4</name>
</gene>
<protein>
    <recommendedName>
        <fullName>Beta-1,3-galactosyltransferase 4</fullName>
        <shortName>Beta-1,3-GalTase 4</shortName>
        <shortName>Beta3Gal-T4</shortName>
        <shortName>Beta3GalT4</shortName>
        <shortName>b3Gal-T4</shortName>
        <ecNumber evidence="4">2.4.1.62</ecNumber>
    </recommendedName>
    <alternativeName>
        <fullName>Gal-T2</fullName>
    </alternativeName>
    <alternativeName>
        <fullName>Ganglioside galactosyltransferase</fullName>
    </alternativeName>
    <alternativeName>
        <fullName>UDP-galactose:beta-N-acetyl-galactosamine-beta-1,3-galactosyltransferase</fullName>
    </alternativeName>
</protein>
<comment type="function">
    <text evidence="4">Involved in GM1/GD1B/GA1 ganglioside biosynthesis.</text>
</comment>
<comment type="catalytic activity">
    <reaction evidence="4">
        <text>a ganglioside GM2 (d18:1(4E)) + UDP-alpha-D-galactose = a ganglioside GM1 (d18:1(4E)) + UDP + H(+)</text>
        <dbReference type="Rhea" id="RHEA:16773"/>
        <dbReference type="ChEBI" id="CHEBI:15378"/>
        <dbReference type="ChEBI" id="CHEBI:58223"/>
        <dbReference type="ChEBI" id="CHEBI:66914"/>
        <dbReference type="ChEBI" id="CHEBI:71502"/>
        <dbReference type="ChEBI" id="CHEBI:77709"/>
        <dbReference type="EC" id="2.4.1.62"/>
    </reaction>
    <physiologicalReaction direction="left-to-right" evidence="6">
        <dbReference type="Rhea" id="RHEA:16774"/>
    </physiologicalReaction>
</comment>
<comment type="catalytic activity">
    <reaction evidence="1">
        <text>a ganglioside GM2 + UDP-alpha-D-galactose = a ganglioside GM1 + UDP + H(+)</text>
        <dbReference type="Rhea" id="RHEA:48280"/>
        <dbReference type="ChEBI" id="CHEBI:15378"/>
        <dbReference type="ChEBI" id="CHEBI:58223"/>
        <dbReference type="ChEBI" id="CHEBI:66914"/>
        <dbReference type="ChEBI" id="CHEBI:79218"/>
        <dbReference type="ChEBI" id="CHEBI:82639"/>
    </reaction>
    <physiologicalReaction direction="left-to-right" evidence="1">
        <dbReference type="Rhea" id="RHEA:48281"/>
    </physiologicalReaction>
</comment>
<comment type="catalytic activity">
    <reaction evidence="4">
        <text>a ganglioside GD2 (d18:1(4E)) + UDP-alpha-D-galactose = a ganglioside GD1b (d18:1(4E)) + UDP + H(+)</text>
        <dbReference type="Rhea" id="RHEA:47568"/>
        <dbReference type="ChEBI" id="CHEBI:15378"/>
        <dbReference type="ChEBI" id="CHEBI:58223"/>
        <dbReference type="ChEBI" id="CHEBI:66914"/>
        <dbReference type="ChEBI" id="CHEBI:78542"/>
        <dbReference type="ChEBI" id="CHEBI:87785"/>
    </reaction>
    <physiologicalReaction direction="left-to-right" evidence="6">
        <dbReference type="Rhea" id="RHEA:47569"/>
    </physiologicalReaction>
</comment>
<comment type="catalytic activity">
    <reaction evidence="4">
        <text>a ganglioside GA2 (d18:1(4E)) + UDP-alpha-D-galactose = a ganglioside GA1 (d18:1(4E)) + UDP + H(+)</text>
        <dbReference type="Rhea" id="RHEA:41960"/>
        <dbReference type="ChEBI" id="CHEBI:15378"/>
        <dbReference type="ChEBI" id="CHEBI:27731"/>
        <dbReference type="ChEBI" id="CHEBI:27938"/>
        <dbReference type="ChEBI" id="CHEBI:58223"/>
        <dbReference type="ChEBI" id="CHEBI:66914"/>
    </reaction>
    <physiologicalReaction direction="left-to-right" evidence="6">
        <dbReference type="Rhea" id="RHEA:41961"/>
    </physiologicalReaction>
</comment>
<comment type="pathway">
    <text>Protein modification; protein glycosylation.</text>
</comment>
<comment type="subcellular location">
    <subcellularLocation>
        <location evidence="1">Golgi apparatus membrane</location>
        <topology evidence="2">Single-pass type II membrane protein</topology>
    </subcellularLocation>
</comment>
<comment type="tissue specificity">
    <text evidence="4">Highly expressed in thymus, spleen, kidney and testis and, to a lesser extent, in brain and liver.</text>
</comment>
<comment type="developmental stage">
    <text evidence="4">In the embryonic brain, expression begins at day 12 and continues until birth. Expression is maintained at low levels in adult brain.</text>
</comment>
<comment type="similarity">
    <text evidence="5">Belongs to the glycosyltransferase 31 family.</text>
</comment>
<dbReference type="EC" id="2.4.1.62" evidence="4"/>
<dbReference type="EMBL" id="AB003478">
    <property type="protein sequence ID" value="BAA32045.1"/>
    <property type="molecule type" value="mRNA"/>
</dbReference>
<dbReference type="SMR" id="O88178"/>
<dbReference type="FunCoup" id="O88178">
    <property type="interactions" value="61"/>
</dbReference>
<dbReference type="STRING" id="10116.ENSRNOP00000000550"/>
<dbReference type="CAZy" id="GT31">
    <property type="family name" value="Glycosyltransferase Family 31"/>
</dbReference>
<dbReference type="GlyCosmos" id="O88178">
    <property type="glycosylation" value="1 site, No reported glycans"/>
</dbReference>
<dbReference type="GlyGen" id="O88178">
    <property type="glycosylation" value="1 site"/>
</dbReference>
<dbReference type="PhosphoSitePlus" id="O88178"/>
<dbReference type="PaxDb" id="10116-ENSRNOP00000000550"/>
<dbReference type="UCSC" id="RGD:620328">
    <property type="organism name" value="rat"/>
</dbReference>
<dbReference type="AGR" id="RGD:620328"/>
<dbReference type="RGD" id="620328">
    <property type="gene designation" value="B3galt4"/>
</dbReference>
<dbReference type="eggNOG" id="KOG2287">
    <property type="taxonomic scope" value="Eukaryota"/>
</dbReference>
<dbReference type="InParanoid" id="O88178"/>
<dbReference type="PhylomeDB" id="O88178"/>
<dbReference type="Reactome" id="R-RNO-9037629">
    <property type="pathway name" value="Lewis blood group biosynthesis"/>
</dbReference>
<dbReference type="Reactome" id="R-RNO-9840309">
    <property type="pathway name" value="Glycosphingolipid biosynthesis"/>
</dbReference>
<dbReference type="UniPathway" id="UPA00378"/>
<dbReference type="PRO" id="PR:O88178"/>
<dbReference type="Proteomes" id="UP000002494">
    <property type="component" value="Unplaced"/>
</dbReference>
<dbReference type="GO" id="GO:0000139">
    <property type="term" value="C:Golgi membrane"/>
    <property type="evidence" value="ECO:0000318"/>
    <property type="project" value="GO_Central"/>
</dbReference>
<dbReference type="GO" id="GO:0047915">
    <property type="term" value="F:ganglioside galactosyltransferase activity"/>
    <property type="evidence" value="ECO:0007669"/>
    <property type="project" value="UniProtKB-EC"/>
</dbReference>
<dbReference type="GO" id="GO:0016757">
    <property type="term" value="F:glycosyltransferase activity"/>
    <property type="evidence" value="ECO:0000318"/>
    <property type="project" value="GO_Central"/>
</dbReference>
<dbReference type="GO" id="GO:0008499">
    <property type="term" value="F:N-acetyl-beta-D-glucosaminide beta-(1,3)-galactosyltransferase activity"/>
    <property type="evidence" value="ECO:0000266"/>
    <property type="project" value="RGD"/>
</dbReference>
<dbReference type="GO" id="GO:0001574">
    <property type="term" value="P:ganglioside biosynthetic process"/>
    <property type="evidence" value="ECO:0000266"/>
    <property type="project" value="RGD"/>
</dbReference>
<dbReference type="GO" id="GO:0006493">
    <property type="term" value="P:protein O-linked glycosylation"/>
    <property type="evidence" value="ECO:0000318"/>
    <property type="project" value="GO_Central"/>
</dbReference>
<dbReference type="FunFam" id="3.90.550.50:FF:000050">
    <property type="entry name" value="Beta-1,3-galactosyltransferase 4"/>
    <property type="match status" value="1"/>
</dbReference>
<dbReference type="Gene3D" id="3.90.550.50">
    <property type="match status" value="1"/>
</dbReference>
<dbReference type="InterPro" id="IPR002659">
    <property type="entry name" value="Glyco_trans_31"/>
</dbReference>
<dbReference type="PANTHER" id="PTHR11214:SF378">
    <property type="entry name" value="BETA-1,3-GALACTOSYLTRANSFERASE 4"/>
    <property type="match status" value="1"/>
</dbReference>
<dbReference type="PANTHER" id="PTHR11214">
    <property type="entry name" value="BETA-1,3-N-ACETYLGLUCOSAMINYLTRANSFERASE"/>
    <property type="match status" value="1"/>
</dbReference>
<dbReference type="Pfam" id="PF01762">
    <property type="entry name" value="Galactosyl_T"/>
    <property type="match status" value="1"/>
</dbReference>